<dbReference type="EC" id="2.4.1.109" evidence="1"/>
<dbReference type="EMBL" id="CP017626">
    <property type="protein sequence ID" value="AOW29221.1"/>
    <property type="molecule type" value="Genomic_DNA"/>
</dbReference>
<dbReference type="RefSeq" id="XP_717207.1">
    <property type="nucleotide sequence ID" value="XM_712114.2"/>
</dbReference>
<dbReference type="SMR" id="Q5A688"/>
<dbReference type="BioGRID" id="1224140">
    <property type="interactions" value="2"/>
</dbReference>
<dbReference type="STRING" id="237561.Q5A688"/>
<dbReference type="GlyCosmos" id="Q5A688">
    <property type="glycosylation" value="4 sites, No reported glycans"/>
</dbReference>
<dbReference type="EnsemblFungi" id="C4_04780W_A-T">
    <property type="protein sequence ID" value="C4_04780W_A-T-p1"/>
    <property type="gene ID" value="C4_04780W_A"/>
</dbReference>
<dbReference type="GeneID" id="3641116"/>
<dbReference type="KEGG" id="cal:CAALFM_C404780WA"/>
<dbReference type="CGD" id="CAL0000189855">
    <property type="gene designation" value="PMT6"/>
</dbReference>
<dbReference type="VEuPathDB" id="FungiDB:C4_04780W_A"/>
<dbReference type="eggNOG" id="KOG3359">
    <property type="taxonomic scope" value="Eukaryota"/>
</dbReference>
<dbReference type="HOGENOM" id="CLU_008438_5_0_1"/>
<dbReference type="InParanoid" id="Q5A688"/>
<dbReference type="OrthoDB" id="292747at2759"/>
<dbReference type="UniPathway" id="UPA00378"/>
<dbReference type="PRO" id="PR:Q5A688"/>
<dbReference type="Proteomes" id="UP000000559">
    <property type="component" value="Chromosome 4"/>
</dbReference>
<dbReference type="GO" id="GO:0005783">
    <property type="term" value="C:endoplasmic reticulum"/>
    <property type="evidence" value="ECO:0000318"/>
    <property type="project" value="GO_Central"/>
</dbReference>
<dbReference type="GO" id="GO:0005789">
    <property type="term" value="C:endoplasmic reticulum membrane"/>
    <property type="evidence" value="ECO:0007669"/>
    <property type="project" value="UniProtKB-SubCell"/>
</dbReference>
<dbReference type="GO" id="GO:0004169">
    <property type="term" value="F:dolichyl-phosphate-mannose-protein mannosyltransferase activity"/>
    <property type="evidence" value="ECO:0000318"/>
    <property type="project" value="GO_Central"/>
</dbReference>
<dbReference type="GO" id="GO:0036244">
    <property type="term" value="P:cellular response to neutral pH"/>
    <property type="evidence" value="ECO:0000315"/>
    <property type="project" value="CGD"/>
</dbReference>
<dbReference type="GO" id="GO:0009267">
    <property type="term" value="P:cellular response to starvation"/>
    <property type="evidence" value="ECO:0000315"/>
    <property type="project" value="CGD"/>
</dbReference>
<dbReference type="GO" id="GO:0030447">
    <property type="term" value="P:filamentous growth"/>
    <property type="evidence" value="ECO:0000315"/>
    <property type="project" value="CGD"/>
</dbReference>
<dbReference type="GO" id="GO:0044182">
    <property type="term" value="P:filamentous growth of a population of unicellular organisms"/>
    <property type="evidence" value="ECO:0000315"/>
    <property type="project" value="CGD"/>
</dbReference>
<dbReference type="GO" id="GO:0036178">
    <property type="term" value="P:filamentous growth of a population of unicellular organisms in response to neutral pH"/>
    <property type="evidence" value="ECO:0000315"/>
    <property type="project" value="CGD"/>
</dbReference>
<dbReference type="GO" id="GO:0036170">
    <property type="term" value="P:filamentous growth of a population of unicellular organisms in response to starvation"/>
    <property type="evidence" value="ECO:0000315"/>
    <property type="project" value="CGD"/>
</dbReference>
<dbReference type="GO" id="GO:0035269">
    <property type="term" value="P:protein O-linked mannosylation"/>
    <property type="evidence" value="ECO:0000318"/>
    <property type="project" value="GO_Central"/>
</dbReference>
<dbReference type="GO" id="GO:0044011">
    <property type="term" value="P:single-species biofilm formation on inanimate substrate"/>
    <property type="evidence" value="ECO:0000315"/>
    <property type="project" value="CGD"/>
</dbReference>
<dbReference type="CDD" id="cd23284">
    <property type="entry name" value="beta-trefoil_MIR_PMT2-like"/>
    <property type="match status" value="1"/>
</dbReference>
<dbReference type="FunFam" id="2.80.10.50:FF:000080">
    <property type="entry name" value="Dolichyl-phosphate-mannose-protein mannosyltransferase 6"/>
    <property type="match status" value="1"/>
</dbReference>
<dbReference type="Gene3D" id="2.80.10.50">
    <property type="match status" value="1"/>
</dbReference>
<dbReference type="InterPro" id="IPR027005">
    <property type="entry name" value="GlyclTrfase_39-like"/>
</dbReference>
<dbReference type="InterPro" id="IPR003342">
    <property type="entry name" value="Glyco_trans_39/83"/>
</dbReference>
<dbReference type="InterPro" id="IPR036300">
    <property type="entry name" value="MIR_dom_sf"/>
</dbReference>
<dbReference type="InterPro" id="IPR016093">
    <property type="entry name" value="MIR_motif"/>
</dbReference>
<dbReference type="InterPro" id="IPR032421">
    <property type="entry name" value="PMT_4TMC"/>
</dbReference>
<dbReference type="PANTHER" id="PTHR10050">
    <property type="entry name" value="DOLICHYL-PHOSPHATE-MANNOSE--PROTEIN MANNOSYLTRANSFERASE"/>
    <property type="match status" value="1"/>
</dbReference>
<dbReference type="PANTHER" id="PTHR10050:SF52">
    <property type="entry name" value="DOLICHYL-PHOSPHATE-MANNOSE--PROTEIN MANNOSYLTRANSFERASE 6"/>
    <property type="match status" value="1"/>
</dbReference>
<dbReference type="Pfam" id="PF02815">
    <property type="entry name" value="MIR"/>
    <property type="match status" value="1"/>
</dbReference>
<dbReference type="Pfam" id="PF02366">
    <property type="entry name" value="PMT"/>
    <property type="match status" value="1"/>
</dbReference>
<dbReference type="Pfam" id="PF16192">
    <property type="entry name" value="PMT_4TMC"/>
    <property type="match status" value="1"/>
</dbReference>
<dbReference type="SMART" id="SM00472">
    <property type="entry name" value="MIR"/>
    <property type="match status" value="3"/>
</dbReference>
<dbReference type="SUPFAM" id="SSF82109">
    <property type="entry name" value="MIR domain"/>
    <property type="match status" value="1"/>
</dbReference>
<dbReference type="PROSITE" id="PS50919">
    <property type="entry name" value="MIR"/>
    <property type="match status" value="3"/>
</dbReference>
<evidence type="ECO:0000250" key="1">
    <source>
        <dbReference type="UniProtKB" id="P33775"/>
    </source>
</evidence>
<evidence type="ECO:0000255" key="2"/>
<evidence type="ECO:0000255" key="3">
    <source>
        <dbReference type="PROSITE-ProRule" id="PRU00131"/>
    </source>
</evidence>
<evidence type="ECO:0000255" key="4">
    <source>
        <dbReference type="PROSITE-ProRule" id="PRU00498"/>
    </source>
</evidence>
<evidence type="ECO:0000256" key="5">
    <source>
        <dbReference type="SAM" id="MobiDB-lite"/>
    </source>
</evidence>
<evidence type="ECO:0000269" key="6">
    <source>
    </source>
</evidence>
<evidence type="ECO:0000269" key="7">
    <source>
    </source>
</evidence>
<evidence type="ECO:0000269" key="8">
    <source>
    </source>
</evidence>
<evidence type="ECO:0000269" key="9">
    <source>
    </source>
</evidence>
<evidence type="ECO:0000305" key="10"/>
<organism>
    <name type="scientific">Candida albicans (strain SC5314 / ATCC MYA-2876)</name>
    <name type="common">Yeast</name>
    <dbReference type="NCBI Taxonomy" id="237561"/>
    <lineage>
        <taxon>Eukaryota</taxon>
        <taxon>Fungi</taxon>
        <taxon>Dikarya</taxon>
        <taxon>Ascomycota</taxon>
        <taxon>Saccharomycotina</taxon>
        <taxon>Pichiomycetes</taxon>
        <taxon>Debaryomycetaceae</taxon>
        <taxon>Candida/Lodderomyces clade</taxon>
        <taxon>Candida</taxon>
    </lineage>
</organism>
<gene>
    <name type="primary">PMT6</name>
    <name type="synonym">PMT3</name>
    <name type="ordered locus">CAALFM_C404780WA</name>
    <name type="ORF">CaO19.11283</name>
    <name type="ORF">CaO19.3802</name>
</gene>
<reference key="1">
    <citation type="journal article" date="2004" name="Proc. Natl. Acad. Sci. U.S.A.">
        <title>The diploid genome sequence of Candida albicans.</title>
        <authorList>
            <person name="Jones T."/>
            <person name="Federspiel N.A."/>
            <person name="Chibana H."/>
            <person name="Dungan J."/>
            <person name="Kalman S."/>
            <person name="Magee B.B."/>
            <person name="Newport G."/>
            <person name="Thorstenson Y.R."/>
            <person name="Agabian N."/>
            <person name="Magee P.T."/>
            <person name="Davis R.W."/>
            <person name="Scherer S."/>
        </authorList>
    </citation>
    <scope>NUCLEOTIDE SEQUENCE [LARGE SCALE GENOMIC DNA]</scope>
    <source>
        <strain>SC5314 / ATCC MYA-2876</strain>
    </source>
</reference>
<reference key="2">
    <citation type="journal article" date="2007" name="Genome Biol.">
        <title>Assembly of the Candida albicans genome into sixteen supercontigs aligned on the eight chromosomes.</title>
        <authorList>
            <person name="van het Hoog M."/>
            <person name="Rast T.J."/>
            <person name="Martchenko M."/>
            <person name="Grindle S."/>
            <person name="Dignard D."/>
            <person name="Hogues H."/>
            <person name="Cuomo C."/>
            <person name="Berriman M."/>
            <person name="Scherer S."/>
            <person name="Magee B.B."/>
            <person name="Whiteway M."/>
            <person name="Chibana H."/>
            <person name="Nantel A."/>
            <person name="Magee P.T."/>
        </authorList>
    </citation>
    <scope>GENOME REANNOTATION</scope>
    <source>
        <strain>SC5314 / ATCC MYA-2876</strain>
    </source>
</reference>
<reference key="3">
    <citation type="journal article" date="2013" name="Genome Biol.">
        <title>Assembly of a phased diploid Candida albicans genome facilitates allele-specific measurements and provides a simple model for repeat and indel structure.</title>
        <authorList>
            <person name="Muzzey D."/>
            <person name="Schwartz K."/>
            <person name="Weissman J.S."/>
            <person name="Sherlock G."/>
        </authorList>
    </citation>
    <scope>NUCLEOTIDE SEQUENCE [LARGE SCALE GENOMIC DNA]</scope>
    <scope>GENOME REANNOTATION</scope>
    <source>
        <strain>SC5314 / ATCC MYA-2876</strain>
    </source>
</reference>
<reference key="4">
    <citation type="journal article" date="2000" name="J. Bacteriol.">
        <title>Morphogenesis, adhesive properties, and antifungal resistance depend on the Pmt6 protein mannosyltransferase in the fungal pathogen candida albicans.</title>
        <authorList>
            <person name="Timpel C."/>
            <person name="Zink S."/>
            <person name="Strahl-Bolsinger S."/>
            <person name="Schroppel K."/>
            <person name="Ernst J."/>
        </authorList>
    </citation>
    <scope>DISRUPTION PHENOTYPE</scope>
    <scope>FUNCTION</scope>
</reference>
<reference key="5">
    <citation type="journal article" date="2005" name="Infect. Immun.">
        <title>Virulence of the fungal pathogen Candida albicans requires the five isoforms of protein mannosyltransferases.</title>
        <authorList>
            <person name="Rouabhia M."/>
            <person name="Schaller M."/>
            <person name="Corbucci C."/>
            <person name="Vecchiarelli A."/>
            <person name="Prill S.K."/>
            <person name="Giasson L."/>
            <person name="Ernst J.F."/>
        </authorList>
    </citation>
    <scope>DISRUPTION PHENOTYPE</scope>
    <scope>FUNCTION</scope>
</reference>
<reference key="6">
    <citation type="journal article" date="2011" name="J. Biol. Chem.">
        <title>Cap2-HAP complex is a critical transcriptional regulator that has dual but contrasting roles in regulation of iron homeostasis in Candida albicans.</title>
        <authorList>
            <person name="Singh R.P."/>
            <person name="Prasad H.K."/>
            <person name="Sinha I."/>
            <person name="Agarwal N."/>
            <person name="Natarajan K."/>
        </authorList>
    </citation>
    <scope>INDUCTION</scope>
</reference>
<reference key="7">
    <citation type="journal article" date="2013" name="Eukaryot. Cell">
        <title>Identification of genes upregulated by the transcription factor Bcr1 that are involved in impermeability, impenetrability, and drug resistance of Candida albicans a/alpha biofilms.</title>
        <authorList>
            <person name="Srikantha T."/>
            <person name="Daniels K.J."/>
            <person name="Pujol C."/>
            <person name="Kim E."/>
            <person name="Soll D.R."/>
        </authorList>
    </citation>
    <scope>INDUCTION</scope>
</reference>
<comment type="function">
    <text evidence="1 6 7">Protein mannosyltransferase (PMT) involved in hyphal morphogenesis and drug sensitivity. Transfers mannose from Dol-P-mannose to Ser or Thr residues on proteins. PMT1, PMT2 and PMT4 account for most of the protein-O-glycosylation activity, while PMT5 and PMT6 may specifically modulate a much narrower spectrum of target proteins. Required for biofilm formation and virulence.</text>
</comment>
<comment type="catalytic activity">
    <reaction evidence="1">
        <text>a di-trans,poly-cis-dolichyl beta-D-mannosyl phosphate + L-seryl-[protein] = 3-O-(alpha-D-mannosyl)-L-seryl-[protein] + a di-trans,poly-cis-dolichyl phosphate + H(+)</text>
        <dbReference type="Rhea" id="RHEA:17377"/>
        <dbReference type="Rhea" id="RHEA-COMP:9863"/>
        <dbReference type="Rhea" id="RHEA-COMP:13546"/>
        <dbReference type="Rhea" id="RHEA-COMP:19498"/>
        <dbReference type="Rhea" id="RHEA-COMP:19501"/>
        <dbReference type="ChEBI" id="CHEBI:15378"/>
        <dbReference type="ChEBI" id="CHEBI:29999"/>
        <dbReference type="ChEBI" id="CHEBI:57683"/>
        <dbReference type="ChEBI" id="CHEBI:58211"/>
        <dbReference type="ChEBI" id="CHEBI:137321"/>
        <dbReference type="EC" id="2.4.1.109"/>
    </reaction>
</comment>
<comment type="catalytic activity">
    <reaction evidence="1">
        <text>a di-trans,poly-cis-dolichyl beta-D-mannosyl phosphate + L-threonyl-[protein] = 3-O-(alpha-D-mannosyl)-L-threonyl-[protein] + a di-trans,poly-cis-dolichyl phosphate + H(+)</text>
        <dbReference type="Rhea" id="RHEA:53396"/>
        <dbReference type="Rhea" id="RHEA-COMP:11060"/>
        <dbReference type="Rhea" id="RHEA-COMP:13547"/>
        <dbReference type="Rhea" id="RHEA-COMP:19498"/>
        <dbReference type="Rhea" id="RHEA-COMP:19501"/>
        <dbReference type="ChEBI" id="CHEBI:15378"/>
        <dbReference type="ChEBI" id="CHEBI:30013"/>
        <dbReference type="ChEBI" id="CHEBI:57683"/>
        <dbReference type="ChEBI" id="CHEBI:58211"/>
        <dbReference type="ChEBI" id="CHEBI:137323"/>
        <dbReference type="EC" id="2.4.1.109"/>
    </reaction>
</comment>
<comment type="pathway">
    <text evidence="10">Protein modification; protein glycosylation.</text>
</comment>
<comment type="subcellular location">
    <subcellularLocation>
        <location evidence="1">Endoplasmic reticulum membrane</location>
        <topology evidence="2">Multi-pass membrane protein</topology>
    </subcellularLocation>
</comment>
<comment type="induction">
    <text evidence="8 9">Expression is repressed by HAP4 and BCR1.</text>
</comment>
<comment type="disruption phenotype">
    <text evidence="6 7">Leads to supersensitivity to hygromycin B. Impairs filamentation, significantly reduces adherence to endothelial cells, and shows reduced virulence in a mouse model of hematogenously disseminated candidiasis (HDC) and using reconstituted human epithelium (RHE).</text>
</comment>
<comment type="similarity">
    <text evidence="10">Belongs to the glycosyltransferase 39 family.</text>
</comment>
<keyword id="KW-0256">Endoplasmic reticulum</keyword>
<keyword id="KW-0325">Glycoprotein</keyword>
<keyword id="KW-0328">Glycosyltransferase</keyword>
<keyword id="KW-0472">Membrane</keyword>
<keyword id="KW-1185">Reference proteome</keyword>
<keyword id="KW-0677">Repeat</keyword>
<keyword id="KW-0808">Transferase</keyword>
<keyword id="KW-0812">Transmembrane</keyword>
<keyword id="KW-1133">Transmembrane helix</keyword>
<name>PMT6_CANAL</name>
<accession>Q5A688</accession>
<accession>A0A1D8PM65</accession>
<feature type="chain" id="PRO_0000430576" description="Dolichyl-phosphate-mannose--protein mannosyltransferase 6">
    <location>
        <begin position="1"/>
        <end position="832"/>
    </location>
</feature>
<feature type="transmembrane region" description="Helical; Name=1" evidence="2">
    <location>
        <begin position="135"/>
        <end position="155"/>
    </location>
</feature>
<feature type="transmembrane region" description="Helical; Name=2" evidence="2">
    <location>
        <begin position="175"/>
        <end position="194"/>
    </location>
</feature>
<feature type="transmembrane region" description="Helical; Name=3" evidence="2">
    <location>
        <begin position="206"/>
        <end position="227"/>
    </location>
</feature>
<feature type="transmembrane region" description="Helical; Name=4" evidence="2">
    <location>
        <begin position="232"/>
        <end position="252"/>
    </location>
</feature>
<feature type="transmembrane region" description="Helical; Name=5" evidence="2">
    <location>
        <begin position="266"/>
        <end position="286"/>
    </location>
</feature>
<feature type="transmembrane region" description="Helical; Name=6" evidence="2">
    <location>
        <begin position="293"/>
        <end position="311"/>
    </location>
</feature>
<feature type="transmembrane region" description="Helical; Name=7" evidence="2">
    <location>
        <begin position="327"/>
        <end position="347"/>
    </location>
</feature>
<feature type="transmembrane region" description="Helical; Name=8" evidence="2">
    <location>
        <begin position="676"/>
        <end position="696"/>
    </location>
</feature>
<feature type="transmembrane region" description="Helical; Name=9" evidence="2">
    <location>
        <begin position="723"/>
        <end position="743"/>
    </location>
</feature>
<feature type="transmembrane region" description="Helical; Name=10" evidence="2">
    <location>
        <begin position="755"/>
        <end position="775"/>
    </location>
</feature>
<feature type="transmembrane region" description="Helical; Name=11" evidence="2">
    <location>
        <begin position="787"/>
        <end position="807"/>
    </location>
</feature>
<feature type="domain" description="MIR 1" evidence="3">
    <location>
        <begin position="383"/>
        <end position="437"/>
    </location>
</feature>
<feature type="domain" description="MIR 2" evidence="3">
    <location>
        <begin position="466"/>
        <end position="522"/>
    </location>
</feature>
<feature type="domain" description="MIR 3" evidence="3">
    <location>
        <begin position="537"/>
        <end position="595"/>
    </location>
</feature>
<feature type="region of interest" description="Disordered" evidence="5">
    <location>
        <begin position="1"/>
        <end position="44"/>
    </location>
</feature>
<feature type="glycosylation site" description="N-linked (GlcNAc...) asparagine" evidence="4">
    <location>
        <position position="20"/>
    </location>
</feature>
<feature type="glycosylation site" description="N-linked (GlcNAc...) asparagine" evidence="4">
    <location>
        <position position="59"/>
    </location>
</feature>
<feature type="glycosylation site" description="N-linked (GlcNAc...) asparagine" evidence="4">
    <location>
        <position position="357"/>
    </location>
</feature>
<feature type="glycosylation site" description="N-linked (GlcNAc...) asparagine" evidence="4">
    <location>
        <position position="453"/>
    </location>
</feature>
<sequence length="832" mass="94913">MATGYSTGVSPFDLDENNHNDSIHHRHQNHHSQSHDSSGERDDTEIEDIIQKTSKLNINTSTSTKIKNFFFQSSNRHDSSNSPPLREVFIKTINPLILTAISSFVRLYRIDVANSVVWDEAHFGKFGSQYLKRQFYFDVHPPLGKLLIGLSGYLADYDGNFDFESSNVYPDNVNYVFMRIFNCFFGILVTPLAYKTAVILGYNQFTCWLIAFMVIFEQLSLTLSKFILLDSMLLFFTVLTMYCLVKVHTLAIARVGSNSKTPLTKLEIKWYILTGISIGCVCSVKWVGLFVTALVGFYTIVDLWIKFYQTFAIDKKSPKKMSVVNYLIHWVVRIFTLIIIPMTIYVATFKVHFMVLNHTGPDDGTLSTLLQGSLIGNDLQSGPRSVAFGSLVTIRSQGLSPNLIHSHPHNYPQGSQEQQVTTYGFKDDNNEFLFEFGVDAGLRNQHATLENENSTRNGGNDDDYYHVIIHDGDTVRINHKNTGSYLRANAVGAPITSSSYEVSCFGDVESNDWADEWVIEIQSQDQSPDPMFQDEDPSEIHSVSTSFRLKHKQLGCYLATTGKSYPAWGYQQGEVVCKYSVFSRDKNTWWNIEKHVNNKLPLPATEYVPPKPKFWKEFILLNYAMMASNNALIPDPDRFDKLSSEWWEWPILNTGLRMNSWGDADIKYFLLGNPLITWISTIALIVCPLYLLVVGIKYQRQWILLSATDTSNANPANSQSLSLLAARALLPLAGWVLHYVPFILMGRVKYLHHYVPALYFAIFVAGFIVDAILNLDFSYHNNKFQYIFKVVIYSTLYLVICISFWYFKDLSFGMEGSSVDYRHLRLLGSWMI</sequence>
<protein>
    <recommendedName>
        <fullName evidence="10">Dolichyl-phosphate-mannose--protein mannosyltransferase 6</fullName>
        <shortName>Protein mannosyltransferase 6</shortName>
        <ecNumber evidence="1">2.4.1.109</ecNumber>
    </recommendedName>
</protein>
<proteinExistence type="evidence at transcript level"/>